<dbReference type="EC" id="2.7.4.3" evidence="1"/>
<dbReference type="EMBL" id="AP006627">
    <property type="protein sequence ID" value="BAD62714.1"/>
    <property type="molecule type" value="Genomic_DNA"/>
</dbReference>
<dbReference type="RefSeq" id="WP_011245035.1">
    <property type="nucleotide sequence ID" value="NC_006582.1"/>
</dbReference>
<dbReference type="SMR" id="Q5WLP1"/>
<dbReference type="STRING" id="66692.ABC0171"/>
<dbReference type="KEGG" id="bcl:ABC0171"/>
<dbReference type="eggNOG" id="COG0563">
    <property type="taxonomic scope" value="Bacteria"/>
</dbReference>
<dbReference type="HOGENOM" id="CLU_032354_1_2_9"/>
<dbReference type="OrthoDB" id="9805030at2"/>
<dbReference type="UniPathway" id="UPA00588">
    <property type="reaction ID" value="UER00649"/>
</dbReference>
<dbReference type="Proteomes" id="UP000001168">
    <property type="component" value="Chromosome"/>
</dbReference>
<dbReference type="GO" id="GO:0005737">
    <property type="term" value="C:cytoplasm"/>
    <property type="evidence" value="ECO:0007669"/>
    <property type="project" value="UniProtKB-SubCell"/>
</dbReference>
<dbReference type="GO" id="GO:0004017">
    <property type="term" value="F:adenylate kinase activity"/>
    <property type="evidence" value="ECO:0007669"/>
    <property type="project" value="UniProtKB-UniRule"/>
</dbReference>
<dbReference type="GO" id="GO:0005524">
    <property type="term" value="F:ATP binding"/>
    <property type="evidence" value="ECO:0007669"/>
    <property type="project" value="UniProtKB-UniRule"/>
</dbReference>
<dbReference type="GO" id="GO:0044209">
    <property type="term" value="P:AMP salvage"/>
    <property type="evidence" value="ECO:0007669"/>
    <property type="project" value="UniProtKB-UniRule"/>
</dbReference>
<dbReference type="CDD" id="cd01428">
    <property type="entry name" value="ADK"/>
    <property type="match status" value="1"/>
</dbReference>
<dbReference type="FunFam" id="3.40.50.300:FF:000106">
    <property type="entry name" value="Adenylate kinase mitochondrial"/>
    <property type="match status" value="1"/>
</dbReference>
<dbReference type="Gene3D" id="3.40.50.300">
    <property type="entry name" value="P-loop containing nucleotide triphosphate hydrolases"/>
    <property type="match status" value="1"/>
</dbReference>
<dbReference type="HAMAP" id="MF_00235">
    <property type="entry name" value="Adenylate_kinase_Adk"/>
    <property type="match status" value="1"/>
</dbReference>
<dbReference type="InterPro" id="IPR006259">
    <property type="entry name" value="Adenyl_kin_sub"/>
</dbReference>
<dbReference type="InterPro" id="IPR000850">
    <property type="entry name" value="Adenylat/UMP-CMP_kin"/>
</dbReference>
<dbReference type="InterPro" id="IPR033690">
    <property type="entry name" value="Adenylat_kinase_CS"/>
</dbReference>
<dbReference type="InterPro" id="IPR007862">
    <property type="entry name" value="Adenylate_kinase_lid-dom"/>
</dbReference>
<dbReference type="InterPro" id="IPR027417">
    <property type="entry name" value="P-loop_NTPase"/>
</dbReference>
<dbReference type="NCBIfam" id="TIGR01351">
    <property type="entry name" value="adk"/>
    <property type="match status" value="1"/>
</dbReference>
<dbReference type="NCBIfam" id="NF001379">
    <property type="entry name" value="PRK00279.1-1"/>
    <property type="match status" value="1"/>
</dbReference>
<dbReference type="NCBIfam" id="NF001380">
    <property type="entry name" value="PRK00279.1-2"/>
    <property type="match status" value="1"/>
</dbReference>
<dbReference type="NCBIfam" id="NF001381">
    <property type="entry name" value="PRK00279.1-3"/>
    <property type="match status" value="1"/>
</dbReference>
<dbReference type="NCBIfam" id="NF011100">
    <property type="entry name" value="PRK14527.1"/>
    <property type="match status" value="1"/>
</dbReference>
<dbReference type="PANTHER" id="PTHR23359">
    <property type="entry name" value="NUCLEOTIDE KINASE"/>
    <property type="match status" value="1"/>
</dbReference>
<dbReference type="Pfam" id="PF00406">
    <property type="entry name" value="ADK"/>
    <property type="match status" value="1"/>
</dbReference>
<dbReference type="Pfam" id="PF05191">
    <property type="entry name" value="ADK_lid"/>
    <property type="match status" value="1"/>
</dbReference>
<dbReference type="PRINTS" id="PR00094">
    <property type="entry name" value="ADENYLTKNASE"/>
</dbReference>
<dbReference type="SUPFAM" id="SSF52540">
    <property type="entry name" value="P-loop containing nucleoside triphosphate hydrolases"/>
    <property type="match status" value="1"/>
</dbReference>
<dbReference type="PROSITE" id="PS00113">
    <property type="entry name" value="ADENYLATE_KINASE"/>
    <property type="match status" value="1"/>
</dbReference>
<feature type="chain" id="PRO_0000158728" description="Adenylate kinase">
    <location>
        <begin position="1"/>
        <end position="217"/>
    </location>
</feature>
<feature type="region of interest" description="NMP" evidence="1">
    <location>
        <begin position="30"/>
        <end position="59"/>
    </location>
</feature>
<feature type="region of interest" description="LID" evidence="1">
    <location>
        <begin position="126"/>
        <end position="163"/>
    </location>
</feature>
<feature type="binding site" evidence="1">
    <location>
        <begin position="10"/>
        <end position="15"/>
    </location>
    <ligand>
        <name>ATP</name>
        <dbReference type="ChEBI" id="CHEBI:30616"/>
    </ligand>
</feature>
<feature type="binding site" evidence="1">
    <location>
        <position position="31"/>
    </location>
    <ligand>
        <name>AMP</name>
        <dbReference type="ChEBI" id="CHEBI:456215"/>
    </ligand>
</feature>
<feature type="binding site" evidence="1">
    <location>
        <position position="36"/>
    </location>
    <ligand>
        <name>AMP</name>
        <dbReference type="ChEBI" id="CHEBI:456215"/>
    </ligand>
</feature>
<feature type="binding site" evidence="1">
    <location>
        <begin position="57"/>
        <end position="59"/>
    </location>
    <ligand>
        <name>AMP</name>
        <dbReference type="ChEBI" id="CHEBI:456215"/>
    </ligand>
</feature>
<feature type="binding site" evidence="1">
    <location>
        <begin position="85"/>
        <end position="88"/>
    </location>
    <ligand>
        <name>AMP</name>
        <dbReference type="ChEBI" id="CHEBI:456215"/>
    </ligand>
</feature>
<feature type="binding site" evidence="1">
    <location>
        <position position="92"/>
    </location>
    <ligand>
        <name>AMP</name>
        <dbReference type="ChEBI" id="CHEBI:456215"/>
    </ligand>
</feature>
<feature type="binding site" evidence="1">
    <location>
        <position position="127"/>
    </location>
    <ligand>
        <name>ATP</name>
        <dbReference type="ChEBI" id="CHEBI:30616"/>
    </ligand>
</feature>
<feature type="binding site" evidence="1">
    <location>
        <begin position="136"/>
        <end position="137"/>
    </location>
    <ligand>
        <name>ATP</name>
        <dbReference type="ChEBI" id="CHEBI:30616"/>
    </ligand>
</feature>
<feature type="binding site" evidence="1">
    <location>
        <position position="160"/>
    </location>
    <ligand>
        <name>AMP</name>
        <dbReference type="ChEBI" id="CHEBI:456215"/>
    </ligand>
</feature>
<feature type="binding site" evidence="1">
    <location>
        <position position="171"/>
    </location>
    <ligand>
        <name>AMP</name>
        <dbReference type="ChEBI" id="CHEBI:456215"/>
    </ligand>
</feature>
<feature type="binding site" evidence="1">
    <location>
        <position position="199"/>
    </location>
    <ligand>
        <name>ATP</name>
        <dbReference type="ChEBI" id="CHEBI:30616"/>
    </ligand>
</feature>
<organism>
    <name type="scientific">Shouchella clausii (strain KSM-K16)</name>
    <name type="common">Alkalihalobacillus clausii</name>
    <dbReference type="NCBI Taxonomy" id="66692"/>
    <lineage>
        <taxon>Bacteria</taxon>
        <taxon>Bacillati</taxon>
        <taxon>Bacillota</taxon>
        <taxon>Bacilli</taxon>
        <taxon>Bacillales</taxon>
        <taxon>Bacillaceae</taxon>
        <taxon>Shouchella</taxon>
    </lineage>
</organism>
<name>KAD_SHOC1</name>
<evidence type="ECO:0000255" key="1">
    <source>
        <dbReference type="HAMAP-Rule" id="MF_00235"/>
    </source>
</evidence>
<proteinExistence type="inferred from homology"/>
<keyword id="KW-0067">ATP-binding</keyword>
<keyword id="KW-0963">Cytoplasm</keyword>
<keyword id="KW-0418">Kinase</keyword>
<keyword id="KW-0545">Nucleotide biosynthesis</keyword>
<keyword id="KW-0547">Nucleotide-binding</keyword>
<keyword id="KW-1185">Reference proteome</keyword>
<keyword id="KW-0808">Transferase</keyword>
<gene>
    <name evidence="1" type="primary">adk</name>
    <name type="ordered locus">ABC0171</name>
</gene>
<sequence>MNLILMGLPGAGKGTQAEKIVNDYGIPHISTGDMFRAAMKNETELGLKAKSFIDAGDLVPDEVTIGIVKERLSEDDCENGFLLDGFPRTIAQAEALEGILSSLGKQLDHVLNIAVPKELLMERLTGRRVSPTTGKTYHIVYNPPKVEGKCDIDGSDLIQRDDDKPETVKRRLEVNEKQTKPLIDFYEAKGYLRQVDGNQDMNTVYADIKAILSEKRA</sequence>
<comment type="function">
    <text evidence="1">Catalyzes the reversible transfer of the terminal phosphate group between ATP and AMP. Plays an important role in cellular energy homeostasis and in adenine nucleotide metabolism.</text>
</comment>
<comment type="catalytic activity">
    <reaction evidence="1">
        <text>AMP + ATP = 2 ADP</text>
        <dbReference type="Rhea" id="RHEA:12973"/>
        <dbReference type="ChEBI" id="CHEBI:30616"/>
        <dbReference type="ChEBI" id="CHEBI:456215"/>
        <dbReference type="ChEBI" id="CHEBI:456216"/>
        <dbReference type="EC" id="2.7.4.3"/>
    </reaction>
</comment>
<comment type="pathway">
    <text evidence="1">Purine metabolism; AMP biosynthesis via salvage pathway; AMP from ADP: step 1/1.</text>
</comment>
<comment type="subunit">
    <text evidence="1">Monomer.</text>
</comment>
<comment type="subcellular location">
    <subcellularLocation>
        <location evidence="1">Cytoplasm</location>
    </subcellularLocation>
</comment>
<comment type="domain">
    <text evidence="1">Consists of three domains, a large central CORE domain and two small peripheral domains, NMPbind and LID, which undergo movements during catalysis. The LID domain closes over the site of phosphoryl transfer upon ATP binding. Assembling and dissambling the active center during each catalytic cycle provides an effective means to prevent ATP hydrolysis.</text>
</comment>
<comment type="similarity">
    <text evidence="1">Belongs to the adenylate kinase family.</text>
</comment>
<accession>Q5WLP1</accession>
<protein>
    <recommendedName>
        <fullName evidence="1">Adenylate kinase</fullName>
        <shortName evidence="1">AK</shortName>
        <ecNumber evidence="1">2.7.4.3</ecNumber>
    </recommendedName>
    <alternativeName>
        <fullName evidence="1">ATP-AMP transphosphorylase</fullName>
    </alternativeName>
    <alternativeName>
        <fullName evidence="1">ATP:AMP phosphotransferase</fullName>
    </alternativeName>
    <alternativeName>
        <fullName evidence="1">Adenylate monophosphate kinase</fullName>
    </alternativeName>
</protein>
<reference key="1">
    <citation type="submission" date="2003-10" db="EMBL/GenBank/DDBJ databases">
        <title>The complete genome sequence of the alkaliphilic Bacillus clausii KSM-K16.</title>
        <authorList>
            <person name="Takaki Y."/>
            <person name="Kageyama Y."/>
            <person name="Shimamura S."/>
            <person name="Suzuki H."/>
            <person name="Nishi S."/>
            <person name="Hatada Y."/>
            <person name="Kawai S."/>
            <person name="Ito S."/>
            <person name="Horikoshi K."/>
        </authorList>
    </citation>
    <scope>NUCLEOTIDE SEQUENCE [LARGE SCALE GENOMIC DNA]</scope>
    <source>
        <strain>KSM-K16</strain>
    </source>
</reference>